<proteinExistence type="inferred from homology"/>
<evidence type="ECO:0000255" key="1">
    <source>
        <dbReference type="HAMAP-Rule" id="MF_00076"/>
    </source>
</evidence>
<name>HIS7_PSEPF</name>
<comment type="catalytic activity">
    <reaction evidence="1">
        <text>D-erythro-1-(imidazol-4-yl)glycerol 3-phosphate = 3-(imidazol-4-yl)-2-oxopropyl phosphate + H2O</text>
        <dbReference type="Rhea" id="RHEA:11040"/>
        <dbReference type="ChEBI" id="CHEBI:15377"/>
        <dbReference type="ChEBI" id="CHEBI:57766"/>
        <dbReference type="ChEBI" id="CHEBI:58278"/>
        <dbReference type="EC" id="4.2.1.19"/>
    </reaction>
</comment>
<comment type="pathway">
    <text evidence="1">Amino-acid biosynthesis; L-histidine biosynthesis; L-histidine from 5-phospho-alpha-D-ribose 1-diphosphate: step 6/9.</text>
</comment>
<comment type="subcellular location">
    <subcellularLocation>
        <location evidence="1">Cytoplasm</location>
    </subcellularLocation>
</comment>
<comment type="similarity">
    <text evidence="1">Belongs to the imidazoleglycerol-phosphate dehydratase family.</text>
</comment>
<reference key="1">
    <citation type="journal article" date="2009" name="Genome Biol.">
        <title>Genomic and genetic analyses of diversity and plant interactions of Pseudomonas fluorescens.</title>
        <authorList>
            <person name="Silby M.W."/>
            <person name="Cerdeno-Tarraga A.M."/>
            <person name="Vernikos G.S."/>
            <person name="Giddens S.R."/>
            <person name="Jackson R.W."/>
            <person name="Preston G.M."/>
            <person name="Zhang X.-X."/>
            <person name="Moon C.D."/>
            <person name="Gehrig S.M."/>
            <person name="Godfrey S.A.C."/>
            <person name="Knight C.G."/>
            <person name="Malone J.G."/>
            <person name="Robinson Z."/>
            <person name="Spiers A.J."/>
            <person name="Harris S."/>
            <person name="Challis G.L."/>
            <person name="Yaxley A.M."/>
            <person name="Harris D."/>
            <person name="Seeger K."/>
            <person name="Murphy L."/>
            <person name="Rutter S."/>
            <person name="Squares R."/>
            <person name="Quail M.A."/>
            <person name="Saunders E."/>
            <person name="Mavromatis K."/>
            <person name="Brettin T.S."/>
            <person name="Bentley S.D."/>
            <person name="Hothersall J."/>
            <person name="Stephens E."/>
            <person name="Thomas C.M."/>
            <person name="Parkhill J."/>
            <person name="Levy S.B."/>
            <person name="Rainey P.B."/>
            <person name="Thomson N.R."/>
        </authorList>
    </citation>
    <scope>NUCLEOTIDE SEQUENCE [LARGE SCALE GENOMIC DNA]</scope>
    <source>
        <strain>Pf0-1</strain>
    </source>
</reference>
<feature type="chain" id="PRO_1000010334" description="Imidazoleglycerol-phosphate dehydratase">
    <location>
        <begin position="1"/>
        <end position="197"/>
    </location>
</feature>
<sequence length="197" mass="21903">MAERKASVERDTLETQIKASINLDGTGKARFNIGVPFLEHMLDQIARHGLIDLDIECKGDLHIDDHHTVEDVGITLGQAFAQAIGDKKGIRRYGHAYVPLDEALSRVVIDFSGRPGLQMHVPYTRATVGGFDVDLFQEFFQGFVNHALVSLHIDNLRGTNTHHQIETVFKAFGRALRMAVELDERMAGQMPSTKGVL</sequence>
<dbReference type="EC" id="4.2.1.19" evidence="1"/>
<dbReference type="EMBL" id="CP000094">
    <property type="protein sequence ID" value="ABA72067.1"/>
    <property type="molecule type" value="Genomic_DNA"/>
</dbReference>
<dbReference type="RefSeq" id="WP_011332017.1">
    <property type="nucleotide sequence ID" value="NC_007492.2"/>
</dbReference>
<dbReference type="SMR" id="Q3KJI9"/>
<dbReference type="KEGG" id="pfo:Pfl01_0323"/>
<dbReference type="eggNOG" id="COG0131">
    <property type="taxonomic scope" value="Bacteria"/>
</dbReference>
<dbReference type="HOGENOM" id="CLU_044308_3_0_6"/>
<dbReference type="UniPathway" id="UPA00031">
    <property type="reaction ID" value="UER00011"/>
</dbReference>
<dbReference type="Proteomes" id="UP000002704">
    <property type="component" value="Chromosome"/>
</dbReference>
<dbReference type="GO" id="GO:0005737">
    <property type="term" value="C:cytoplasm"/>
    <property type="evidence" value="ECO:0007669"/>
    <property type="project" value="UniProtKB-SubCell"/>
</dbReference>
<dbReference type="GO" id="GO:0004424">
    <property type="term" value="F:imidazoleglycerol-phosphate dehydratase activity"/>
    <property type="evidence" value="ECO:0007669"/>
    <property type="project" value="UniProtKB-UniRule"/>
</dbReference>
<dbReference type="GO" id="GO:0000105">
    <property type="term" value="P:L-histidine biosynthetic process"/>
    <property type="evidence" value="ECO:0007669"/>
    <property type="project" value="UniProtKB-UniRule"/>
</dbReference>
<dbReference type="CDD" id="cd07914">
    <property type="entry name" value="IGPD"/>
    <property type="match status" value="1"/>
</dbReference>
<dbReference type="FunFam" id="3.30.230.40:FF:000002">
    <property type="entry name" value="Imidazoleglycerol-phosphate dehydratase"/>
    <property type="match status" value="1"/>
</dbReference>
<dbReference type="FunFam" id="3.30.230.40:FF:000003">
    <property type="entry name" value="Imidazoleglycerol-phosphate dehydratase HisB"/>
    <property type="match status" value="1"/>
</dbReference>
<dbReference type="Gene3D" id="3.30.230.40">
    <property type="entry name" value="Imidazole glycerol phosphate dehydratase, domain 1"/>
    <property type="match status" value="2"/>
</dbReference>
<dbReference type="HAMAP" id="MF_00076">
    <property type="entry name" value="HisB"/>
    <property type="match status" value="1"/>
</dbReference>
<dbReference type="InterPro" id="IPR038494">
    <property type="entry name" value="IGPD_sf"/>
</dbReference>
<dbReference type="InterPro" id="IPR000807">
    <property type="entry name" value="ImidazoleglycerolP_deHydtase"/>
</dbReference>
<dbReference type="InterPro" id="IPR020565">
    <property type="entry name" value="ImidazoleglycerP_deHydtase_CS"/>
</dbReference>
<dbReference type="InterPro" id="IPR020568">
    <property type="entry name" value="Ribosomal_Su5_D2-typ_SF"/>
</dbReference>
<dbReference type="NCBIfam" id="NF002106">
    <property type="entry name" value="PRK00951.1-1"/>
    <property type="match status" value="1"/>
</dbReference>
<dbReference type="NCBIfam" id="NF002109">
    <property type="entry name" value="PRK00951.1-5"/>
    <property type="match status" value="1"/>
</dbReference>
<dbReference type="NCBIfam" id="NF002111">
    <property type="entry name" value="PRK00951.2-1"/>
    <property type="match status" value="1"/>
</dbReference>
<dbReference type="NCBIfam" id="NF002114">
    <property type="entry name" value="PRK00951.2-4"/>
    <property type="match status" value="1"/>
</dbReference>
<dbReference type="PANTHER" id="PTHR23133:SF2">
    <property type="entry name" value="IMIDAZOLEGLYCEROL-PHOSPHATE DEHYDRATASE"/>
    <property type="match status" value="1"/>
</dbReference>
<dbReference type="PANTHER" id="PTHR23133">
    <property type="entry name" value="IMIDAZOLEGLYCEROL-PHOSPHATE DEHYDRATASE HIS7"/>
    <property type="match status" value="1"/>
</dbReference>
<dbReference type="Pfam" id="PF00475">
    <property type="entry name" value="IGPD"/>
    <property type="match status" value="1"/>
</dbReference>
<dbReference type="SUPFAM" id="SSF54211">
    <property type="entry name" value="Ribosomal protein S5 domain 2-like"/>
    <property type="match status" value="2"/>
</dbReference>
<dbReference type="PROSITE" id="PS00954">
    <property type="entry name" value="IGP_DEHYDRATASE_1"/>
    <property type="match status" value="1"/>
</dbReference>
<dbReference type="PROSITE" id="PS00955">
    <property type="entry name" value="IGP_DEHYDRATASE_2"/>
    <property type="match status" value="1"/>
</dbReference>
<accession>Q3KJI9</accession>
<organism>
    <name type="scientific">Pseudomonas fluorescens (strain Pf0-1)</name>
    <dbReference type="NCBI Taxonomy" id="205922"/>
    <lineage>
        <taxon>Bacteria</taxon>
        <taxon>Pseudomonadati</taxon>
        <taxon>Pseudomonadota</taxon>
        <taxon>Gammaproteobacteria</taxon>
        <taxon>Pseudomonadales</taxon>
        <taxon>Pseudomonadaceae</taxon>
        <taxon>Pseudomonas</taxon>
    </lineage>
</organism>
<keyword id="KW-0028">Amino-acid biosynthesis</keyword>
<keyword id="KW-0963">Cytoplasm</keyword>
<keyword id="KW-0368">Histidine biosynthesis</keyword>
<keyword id="KW-0456">Lyase</keyword>
<gene>
    <name evidence="1" type="primary">hisB</name>
    <name type="ordered locus">Pfl01_0323</name>
</gene>
<protein>
    <recommendedName>
        <fullName evidence="1">Imidazoleglycerol-phosphate dehydratase</fullName>
        <shortName evidence="1">IGPD</shortName>
        <ecNumber evidence="1">4.2.1.19</ecNumber>
    </recommendedName>
</protein>